<evidence type="ECO:0000255" key="1">
    <source>
        <dbReference type="HAMAP-Rule" id="MF_01521"/>
    </source>
</evidence>
<accession>A1VXQ0</accession>
<reference key="1">
    <citation type="submission" date="2006-12" db="EMBL/GenBank/DDBJ databases">
        <authorList>
            <person name="Fouts D.E."/>
            <person name="Nelson K.E."/>
            <person name="Sebastian Y."/>
        </authorList>
    </citation>
    <scope>NUCLEOTIDE SEQUENCE [LARGE SCALE GENOMIC DNA]</scope>
    <source>
        <strain>81-176</strain>
    </source>
</reference>
<protein>
    <recommendedName>
        <fullName evidence="1">Putative manganese efflux pump MntP</fullName>
    </recommendedName>
</protein>
<proteinExistence type="inferred from homology"/>
<sequence length="187" mass="20515">MDFYSLIFLSCALGMDAFAVSLCKGFSVKKLHLKHYLIVGIYFGGFQALMPTIGYFIGITFASFIASIDHWIAFILLSLIGLKMIKESLENENCDSNANQFGFKTMLALAIATSIDALAVGVSFAFLNVNLLLAIFLIGIITFILCIIALKIGNKFGIYLKNKAELLGGLVLIILGVKILIEHLFFD</sequence>
<feature type="chain" id="PRO_0000296916" description="Putative manganese efflux pump MntP">
    <location>
        <begin position="1"/>
        <end position="187"/>
    </location>
</feature>
<feature type="transmembrane region" description="Helical" evidence="1">
    <location>
        <begin position="3"/>
        <end position="23"/>
    </location>
</feature>
<feature type="transmembrane region" description="Helical" evidence="1">
    <location>
        <begin position="35"/>
        <end position="55"/>
    </location>
</feature>
<feature type="transmembrane region" description="Helical" evidence="1">
    <location>
        <begin position="56"/>
        <end position="76"/>
    </location>
</feature>
<feature type="transmembrane region" description="Helical" evidence="1">
    <location>
        <begin position="107"/>
        <end position="127"/>
    </location>
</feature>
<feature type="transmembrane region" description="Helical" evidence="1">
    <location>
        <begin position="129"/>
        <end position="149"/>
    </location>
</feature>
<feature type="transmembrane region" description="Helical" evidence="1">
    <location>
        <begin position="166"/>
        <end position="186"/>
    </location>
</feature>
<keyword id="KW-0997">Cell inner membrane</keyword>
<keyword id="KW-1003">Cell membrane</keyword>
<keyword id="KW-0406">Ion transport</keyword>
<keyword id="KW-0464">Manganese</keyword>
<keyword id="KW-0472">Membrane</keyword>
<keyword id="KW-0812">Transmembrane</keyword>
<keyword id="KW-1133">Transmembrane helix</keyword>
<keyword id="KW-0813">Transport</keyword>
<name>MNTP_CAMJJ</name>
<comment type="function">
    <text evidence="1">Probably functions as a manganese efflux pump.</text>
</comment>
<comment type="subcellular location">
    <subcellularLocation>
        <location evidence="1">Cell inner membrane</location>
        <topology evidence="1">Multi-pass membrane protein</topology>
    </subcellularLocation>
</comment>
<comment type="similarity">
    <text evidence="1">Belongs to the MntP (TC 9.B.29) family.</text>
</comment>
<organism>
    <name type="scientific">Campylobacter jejuni subsp. jejuni serotype O:23/36 (strain 81-176)</name>
    <dbReference type="NCBI Taxonomy" id="354242"/>
    <lineage>
        <taxon>Bacteria</taxon>
        <taxon>Pseudomonadati</taxon>
        <taxon>Campylobacterota</taxon>
        <taxon>Epsilonproteobacteria</taxon>
        <taxon>Campylobacterales</taxon>
        <taxon>Campylobacteraceae</taxon>
        <taxon>Campylobacter</taxon>
    </lineage>
</organism>
<dbReference type="EMBL" id="CP000538">
    <property type="protein sequence ID" value="EAQ73168.1"/>
    <property type="molecule type" value="Genomic_DNA"/>
</dbReference>
<dbReference type="RefSeq" id="WP_002851996.1">
    <property type="nucleotide sequence ID" value="NC_008787.1"/>
</dbReference>
<dbReference type="SMR" id="A1VXQ0"/>
<dbReference type="KEGG" id="cjj:CJJ81176_0202"/>
<dbReference type="eggNOG" id="COG1971">
    <property type="taxonomic scope" value="Bacteria"/>
</dbReference>
<dbReference type="HOGENOM" id="CLU_096410_3_0_7"/>
<dbReference type="Proteomes" id="UP000000646">
    <property type="component" value="Chromosome"/>
</dbReference>
<dbReference type="GO" id="GO:0005886">
    <property type="term" value="C:plasma membrane"/>
    <property type="evidence" value="ECO:0007669"/>
    <property type="project" value="UniProtKB-SubCell"/>
</dbReference>
<dbReference type="GO" id="GO:0005384">
    <property type="term" value="F:manganese ion transmembrane transporter activity"/>
    <property type="evidence" value="ECO:0007669"/>
    <property type="project" value="UniProtKB-UniRule"/>
</dbReference>
<dbReference type="HAMAP" id="MF_01521">
    <property type="entry name" value="MntP_pump"/>
    <property type="match status" value="1"/>
</dbReference>
<dbReference type="InterPro" id="IPR003810">
    <property type="entry name" value="Mntp/YtaF"/>
</dbReference>
<dbReference type="InterPro" id="IPR022929">
    <property type="entry name" value="Put_MntP"/>
</dbReference>
<dbReference type="PANTHER" id="PTHR35529">
    <property type="entry name" value="MANGANESE EFFLUX PUMP MNTP-RELATED"/>
    <property type="match status" value="1"/>
</dbReference>
<dbReference type="PANTHER" id="PTHR35529:SF1">
    <property type="entry name" value="MANGANESE EFFLUX PUMP MNTP-RELATED"/>
    <property type="match status" value="1"/>
</dbReference>
<dbReference type="Pfam" id="PF02659">
    <property type="entry name" value="Mntp"/>
    <property type="match status" value="1"/>
</dbReference>
<gene>
    <name evidence="1" type="primary">mntP</name>
    <name type="ordered locus">CJJ81176_0202</name>
</gene>